<gene>
    <name type="ordered locus">MPN_485</name>
    <name type="ORF">MP357</name>
    <name type="ORF">P02_orf316</name>
</gene>
<dbReference type="EMBL" id="U00089">
    <property type="protein sequence ID" value="AAB96005.1"/>
    <property type="molecule type" value="Genomic_DNA"/>
</dbReference>
<dbReference type="PIR" id="S73683">
    <property type="entry name" value="S73683"/>
</dbReference>
<dbReference type="SMR" id="P75300"/>
<dbReference type="EnsemblBacteria" id="AAB96005">
    <property type="protein sequence ID" value="AAB96005"/>
    <property type="gene ID" value="MPN_485"/>
</dbReference>
<dbReference type="KEGG" id="mpn:MPN_485"/>
<dbReference type="HOGENOM" id="CLU_879470_0_0_14"/>
<dbReference type="Proteomes" id="UP000000808">
    <property type="component" value="Chromosome"/>
</dbReference>
<dbReference type="InterPro" id="IPR022186">
    <property type="entry name" value="DUF3713"/>
</dbReference>
<dbReference type="Pfam" id="PF12506">
    <property type="entry name" value="DUF3713"/>
    <property type="match status" value="1"/>
</dbReference>
<comment type="similarity">
    <text evidence="2">Belongs to the MG307/MG309/MG338 family.</text>
</comment>
<sequence length="316" mass="33653">MEGKDAVAIRSIVSRAKIAMTDQTPGFKVDPAFVKVKQNNQTDAFYTTQRKLSGGQTNGGSNNSNDKHHYLQDAVRLTSSQAMAAASTGAGSSSGTNVGGSSGGNSVLIPLPRSAALTHTQQQVQQTTSTLQTPVYARGDDGTYALAIDGGDYFLANNKRDFTKQADILLYRYLQAKSNNFKENGVEFSLNLLESGSLFQTWAQTGLTAKLYGALVAMMGSGQGTQVKGSVQGSSRAASVSVQTTQQSRQQSTDTQESEVVKLAKALLKSSADLAKPFTDNPTFKKALTDIQSEYKDYLAAAGKLSEFKKDLGEVS</sequence>
<protein>
    <recommendedName>
        <fullName>Uncharacterized protein MPN_485</fullName>
    </recommendedName>
</protein>
<name>Y485_MYCPN</name>
<reference key="1">
    <citation type="journal article" date="1996" name="Nucleic Acids Res.">
        <title>Complete sequence analysis of the genome of the bacterium Mycoplasma pneumoniae.</title>
        <authorList>
            <person name="Himmelreich R."/>
            <person name="Hilbert H."/>
            <person name="Plagens H."/>
            <person name="Pirkl E."/>
            <person name="Li B.-C."/>
            <person name="Herrmann R."/>
        </authorList>
    </citation>
    <scope>NUCLEOTIDE SEQUENCE [LARGE SCALE GENOMIC DNA]</scope>
    <source>
        <strain>ATCC 29342 / M129 / Subtype 1</strain>
    </source>
</reference>
<evidence type="ECO:0000256" key="1">
    <source>
        <dbReference type="SAM" id="MobiDB-lite"/>
    </source>
</evidence>
<evidence type="ECO:0000305" key="2"/>
<proteinExistence type="inferred from homology"/>
<feature type="chain" id="PRO_0000210685" description="Uncharacterized protein MPN_485">
    <location>
        <begin position="1"/>
        <end position="316"/>
    </location>
</feature>
<feature type="region of interest" description="Disordered" evidence="1">
    <location>
        <begin position="82"/>
        <end position="105"/>
    </location>
</feature>
<feature type="region of interest" description="Disordered" evidence="1">
    <location>
        <begin position="238"/>
        <end position="257"/>
    </location>
</feature>
<feature type="compositionally biased region" description="Low complexity" evidence="1">
    <location>
        <begin position="84"/>
        <end position="96"/>
    </location>
</feature>
<feature type="compositionally biased region" description="Low complexity" evidence="1">
    <location>
        <begin position="239"/>
        <end position="255"/>
    </location>
</feature>
<organism>
    <name type="scientific">Mycoplasma pneumoniae (strain ATCC 29342 / M129 / Subtype 1)</name>
    <name type="common">Mycoplasmoides pneumoniae</name>
    <dbReference type="NCBI Taxonomy" id="272634"/>
    <lineage>
        <taxon>Bacteria</taxon>
        <taxon>Bacillati</taxon>
        <taxon>Mycoplasmatota</taxon>
        <taxon>Mycoplasmoidales</taxon>
        <taxon>Mycoplasmoidaceae</taxon>
        <taxon>Mycoplasmoides</taxon>
    </lineage>
</organism>
<accession>P75300</accession>
<keyword id="KW-1185">Reference proteome</keyword>